<proteinExistence type="evidence at transcript level"/>
<protein>
    <recommendedName>
        <fullName evidence="1">Large ribosomal subunit protein eL8z</fullName>
    </recommendedName>
    <alternativeName>
        <fullName>60S ribosomal protein L7a-1</fullName>
    </alternativeName>
</protein>
<sequence>MAPKKGVKVAAKKKTAEKVSNPLFERRPKQFGIGGALPPKKDLSRYIKWPKSIRLQRQKRILKQRLKVPPALNQFTKTLDKNLATSLFKVLLKYRPEDKAAKKERLVKKAQAEAEGKPSESKKPIVVKYGLNHVTYLIEQNKAQLVVIAHDVDPIELVVWLPALCRKMEVPYCIVKGKSRLGAVVHQKTASCLCLTTVKNEDKLEFSKILEAIKANFNDKYEEYRKKWGGGIMGSKSQAKTKAKERVIAKEAAQRMN</sequence>
<comment type="similarity">
    <text evidence="2">Belongs to the eukaryotic ribosomal protein eL8 family.</text>
</comment>
<dbReference type="EMBL" id="AC002535">
    <property type="protein sequence ID" value="AAC62850.1"/>
    <property type="molecule type" value="Genomic_DNA"/>
</dbReference>
<dbReference type="EMBL" id="CP002685">
    <property type="protein sequence ID" value="AEC10864.1"/>
    <property type="molecule type" value="Genomic_DNA"/>
</dbReference>
<dbReference type="EMBL" id="AF385719">
    <property type="protein sequence ID" value="AAK60310.1"/>
    <property type="molecule type" value="mRNA"/>
</dbReference>
<dbReference type="EMBL" id="AY052674">
    <property type="protein sequence ID" value="AAK96578.1"/>
    <property type="molecule type" value="mRNA"/>
</dbReference>
<dbReference type="EMBL" id="BT000500">
    <property type="protein sequence ID" value="AAN18069.1"/>
    <property type="molecule type" value="mRNA"/>
</dbReference>
<dbReference type="EMBL" id="AY088386">
    <property type="protein sequence ID" value="AAM65924.1"/>
    <property type="molecule type" value="mRNA"/>
</dbReference>
<dbReference type="EMBL" id="Z26806">
    <property type="protein sequence ID" value="CAA81419.1"/>
    <property type="molecule type" value="mRNA"/>
</dbReference>
<dbReference type="PIR" id="T00423">
    <property type="entry name" value="T00423"/>
</dbReference>
<dbReference type="RefSeq" id="NP_182283.1">
    <property type="nucleotide sequence ID" value="NM_130329.4"/>
</dbReference>
<dbReference type="SMR" id="P49692"/>
<dbReference type="BioGRID" id="4709">
    <property type="interactions" value="152"/>
</dbReference>
<dbReference type="FunCoup" id="P49692">
    <property type="interactions" value="3430"/>
</dbReference>
<dbReference type="IntAct" id="P49692">
    <property type="interactions" value="3"/>
</dbReference>
<dbReference type="STRING" id="3702.P49692"/>
<dbReference type="iPTMnet" id="P49692"/>
<dbReference type="PaxDb" id="3702-AT2G47610.1"/>
<dbReference type="ProteomicsDB" id="228142"/>
<dbReference type="EnsemblPlants" id="AT2G47610.1">
    <property type="protein sequence ID" value="AT2G47610.1"/>
    <property type="gene ID" value="AT2G47610"/>
</dbReference>
<dbReference type="GeneID" id="819374"/>
<dbReference type="Gramene" id="AT2G47610.1">
    <property type="protein sequence ID" value="AT2G47610.1"/>
    <property type="gene ID" value="AT2G47610"/>
</dbReference>
<dbReference type="KEGG" id="ath:AT2G47610"/>
<dbReference type="Araport" id="AT2G47610"/>
<dbReference type="TAIR" id="AT2G47610"/>
<dbReference type="eggNOG" id="KOG3166">
    <property type="taxonomic scope" value="Eukaryota"/>
</dbReference>
<dbReference type="HOGENOM" id="CLU_055193_0_1_1"/>
<dbReference type="InParanoid" id="P49692"/>
<dbReference type="OMA" id="RMVKWPA"/>
<dbReference type="PhylomeDB" id="P49692"/>
<dbReference type="CD-CODE" id="4299E36E">
    <property type="entry name" value="Nucleolus"/>
</dbReference>
<dbReference type="PRO" id="PR:P49692"/>
<dbReference type="Proteomes" id="UP000006548">
    <property type="component" value="Chromosome 2"/>
</dbReference>
<dbReference type="ExpressionAtlas" id="P49692">
    <property type="expression patterns" value="baseline and differential"/>
</dbReference>
<dbReference type="GO" id="GO:0005829">
    <property type="term" value="C:cytosol"/>
    <property type="evidence" value="ECO:0007005"/>
    <property type="project" value="TAIR"/>
</dbReference>
<dbReference type="GO" id="GO:0022625">
    <property type="term" value="C:cytosolic large ribosomal subunit"/>
    <property type="evidence" value="ECO:0007005"/>
    <property type="project" value="TAIR"/>
</dbReference>
<dbReference type="GO" id="GO:0022626">
    <property type="term" value="C:cytosolic ribosome"/>
    <property type="evidence" value="ECO:0007005"/>
    <property type="project" value="TAIR"/>
</dbReference>
<dbReference type="GO" id="GO:0005730">
    <property type="term" value="C:nucleolus"/>
    <property type="evidence" value="ECO:0007005"/>
    <property type="project" value="TAIR"/>
</dbReference>
<dbReference type="GO" id="GO:0000325">
    <property type="term" value="C:plant-type vacuole"/>
    <property type="evidence" value="ECO:0007005"/>
    <property type="project" value="TAIR"/>
</dbReference>
<dbReference type="GO" id="GO:0009506">
    <property type="term" value="C:plasmodesma"/>
    <property type="evidence" value="ECO:0007005"/>
    <property type="project" value="TAIR"/>
</dbReference>
<dbReference type="GO" id="GO:0003729">
    <property type="term" value="F:mRNA binding"/>
    <property type="evidence" value="ECO:0000314"/>
    <property type="project" value="TAIR"/>
</dbReference>
<dbReference type="GO" id="GO:0003735">
    <property type="term" value="F:structural constituent of ribosome"/>
    <property type="evidence" value="ECO:0000314"/>
    <property type="project" value="CAFA"/>
</dbReference>
<dbReference type="GO" id="GO:0042254">
    <property type="term" value="P:ribosome biogenesis"/>
    <property type="evidence" value="ECO:0007669"/>
    <property type="project" value="InterPro"/>
</dbReference>
<dbReference type="FunFam" id="3.30.1330.30:FF:000003">
    <property type="entry name" value="60S ribosomal protein L7a"/>
    <property type="match status" value="1"/>
</dbReference>
<dbReference type="Gene3D" id="3.30.1330.30">
    <property type="match status" value="1"/>
</dbReference>
<dbReference type="InterPro" id="IPR050257">
    <property type="entry name" value="eL8/uL1-like"/>
</dbReference>
<dbReference type="InterPro" id="IPR029064">
    <property type="entry name" value="Ribosomal_eL30-like_sf"/>
</dbReference>
<dbReference type="InterPro" id="IPR004037">
    <property type="entry name" value="Ribosomal_eL8-like_CS"/>
</dbReference>
<dbReference type="InterPro" id="IPR004038">
    <property type="entry name" value="Ribosomal_eL8/eL30/eS12/Gad45"/>
</dbReference>
<dbReference type="InterPro" id="IPR018492">
    <property type="entry name" value="Ribosomal_eL8/Nhp2"/>
</dbReference>
<dbReference type="InterPro" id="IPR001921">
    <property type="entry name" value="Ribosomal_eL8_euk"/>
</dbReference>
<dbReference type="PANTHER" id="PTHR23105">
    <property type="entry name" value="RIBOSOMAL PROTEIN L7AE FAMILY MEMBER"/>
    <property type="match status" value="1"/>
</dbReference>
<dbReference type="Pfam" id="PF01248">
    <property type="entry name" value="Ribosomal_L7Ae"/>
    <property type="match status" value="1"/>
</dbReference>
<dbReference type="PRINTS" id="PR00881">
    <property type="entry name" value="L7ARS6FAMILY"/>
</dbReference>
<dbReference type="PRINTS" id="PR00882">
    <property type="entry name" value="RIBOSOMALL7A"/>
</dbReference>
<dbReference type="SUPFAM" id="SSF55315">
    <property type="entry name" value="L30e-like"/>
    <property type="match status" value="1"/>
</dbReference>
<dbReference type="PROSITE" id="PS01082">
    <property type="entry name" value="RIBOSOMAL_L7AE"/>
    <property type="match status" value="1"/>
</dbReference>
<organism>
    <name type="scientific">Arabidopsis thaliana</name>
    <name type="common">Mouse-ear cress</name>
    <dbReference type="NCBI Taxonomy" id="3702"/>
    <lineage>
        <taxon>Eukaryota</taxon>
        <taxon>Viridiplantae</taxon>
        <taxon>Streptophyta</taxon>
        <taxon>Embryophyta</taxon>
        <taxon>Tracheophyta</taxon>
        <taxon>Spermatophyta</taxon>
        <taxon>Magnoliopsida</taxon>
        <taxon>eudicotyledons</taxon>
        <taxon>Gunneridae</taxon>
        <taxon>Pentapetalae</taxon>
        <taxon>rosids</taxon>
        <taxon>malvids</taxon>
        <taxon>Brassicales</taxon>
        <taxon>Brassicaceae</taxon>
        <taxon>Camelineae</taxon>
        <taxon>Arabidopsis</taxon>
    </lineage>
</organism>
<accession>P49692</accession>
<accession>O22250</accession>
<name>RL7A1_ARATH</name>
<keyword id="KW-1185">Reference proteome</keyword>
<keyword id="KW-0687">Ribonucleoprotein</keyword>
<keyword id="KW-0689">Ribosomal protein</keyword>
<gene>
    <name type="primary">RPL7AA</name>
    <name type="ordered locus">At2g47610</name>
    <name type="ORF">T30B22.8</name>
</gene>
<evidence type="ECO:0000303" key="1">
    <source>
    </source>
</evidence>
<evidence type="ECO:0000305" key="2"/>
<feature type="chain" id="PRO_0000136757" description="Large ribosomal subunit protein eL8z">
    <location>
        <begin position="1"/>
        <end position="257"/>
    </location>
</feature>
<feature type="sequence conflict" description="In Ref. 5; CAA81419." evidence="2" ref="5">
    <original>S</original>
    <variation>T</variation>
    <location>
        <position position="20"/>
    </location>
</feature>
<feature type="sequence conflict" description="In Ref. 5; CAA81419." evidence="2" ref="5">
    <original>V</original>
    <variation>I</variation>
    <location>
        <position position="90"/>
    </location>
</feature>
<feature type="sequence conflict" description="In Ref. 5; CAA81419." evidence="2" ref="5">
    <original>VK</original>
    <variation>LN</variation>
    <location>
        <begin position="107"/>
        <end position="108"/>
    </location>
</feature>
<feature type="sequence conflict" description="In Ref. 5; CAA81419." evidence="2" ref="5">
    <original>S</original>
    <variation>A</variation>
    <location>
        <position position="119"/>
    </location>
</feature>
<feature type="sequence conflict" description="In Ref. 5." evidence="2" ref="5">
    <original>NKAQLVVIA</original>
    <variation>TGTACGTCT</variation>
    <location>
        <begin position="141"/>
        <end position="149"/>
    </location>
</feature>
<reference key="1">
    <citation type="journal article" date="1999" name="Nature">
        <title>Sequence and analysis of chromosome 2 of the plant Arabidopsis thaliana.</title>
        <authorList>
            <person name="Lin X."/>
            <person name="Kaul S."/>
            <person name="Rounsley S.D."/>
            <person name="Shea T.P."/>
            <person name="Benito M.-I."/>
            <person name="Town C.D."/>
            <person name="Fujii C.Y."/>
            <person name="Mason T.M."/>
            <person name="Bowman C.L."/>
            <person name="Barnstead M.E."/>
            <person name="Feldblyum T.V."/>
            <person name="Buell C.R."/>
            <person name="Ketchum K.A."/>
            <person name="Lee J.J."/>
            <person name="Ronning C.M."/>
            <person name="Koo H.L."/>
            <person name="Moffat K.S."/>
            <person name="Cronin L.A."/>
            <person name="Shen M."/>
            <person name="Pai G."/>
            <person name="Van Aken S."/>
            <person name="Umayam L."/>
            <person name="Tallon L.J."/>
            <person name="Gill J.E."/>
            <person name="Adams M.D."/>
            <person name="Carrera A.J."/>
            <person name="Creasy T.H."/>
            <person name="Goodman H.M."/>
            <person name="Somerville C.R."/>
            <person name="Copenhaver G.P."/>
            <person name="Preuss D."/>
            <person name="Nierman W.C."/>
            <person name="White O."/>
            <person name="Eisen J.A."/>
            <person name="Salzberg S.L."/>
            <person name="Fraser C.M."/>
            <person name="Venter J.C."/>
        </authorList>
    </citation>
    <scope>NUCLEOTIDE SEQUENCE [LARGE SCALE GENOMIC DNA]</scope>
    <source>
        <strain>cv. Columbia</strain>
    </source>
</reference>
<reference key="2">
    <citation type="journal article" date="2017" name="Plant J.">
        <title>Araport11: a complete reannotation of the Arabidopsis thaliana reference genome.</title>
        <authorList>
            <person name="Cheng C.Y."/>
            <person name="Krishnakumar V."/>
            <person name="Chan A.P."/>
            <person name="Thibaud-Nissen F."/>
            <person name="Schobel S."/>
            <person name="Town C.D."/>
        </authorList>
    </citation>
    <scope>GENOME REANNOTATION</scope>
    <source>
        <strain>cv. Columbia</strain>
    </source>
</reference>
<reference key="3">
    <citation type="journal article" date="2003" name="Science">
        <title>Empirical analysis of transcriptional activity in the Arabidopsis genome.</title>
        <authorList>
            <person name="Yamada K."/>
            <person name="Lim J."/>
            <person name="Dale J.M."/>
            <person name="Chen H."/>
            <person name="Shinn P."/>
            <person name="Palm C.J."/>
            <person name="Southwick A.M."/>
            <person name="Wu H.C."/>
            <person name="Kim C.J."/>
            <person name="Nguyen M."/>
            <person name="Pham P.K."/>
            <person name="Cheuk R.F."/>
            <person name="Karlin-Newmann G."/>
            <person name="Liu S.X."/>
            <person name="Lam B."/>
            <person name="Sakano H."/>
            <person name="Wu T."/>
            <person name="Yu G."/>
            <person name="Miranda M."/>
            <person name="Quach H.L."/>
            <person name="Tripp M."/>
            <person name="Chang C.H."/>
            <person name="Lee J.M."/>
            <person name="Toriumi M.J."/>
            <person name="Chan M.M."/>
            <person name="Tang C.C."/>
            <person name="Onodera C.S."/>
            <person name="Deng J.M."/>
            <person name="Akiyama K."/>
            <person name="Ansari Y."/>
            <person name="Arakawa T."/>
            <person name="Banh J."/>
            <person name="Banno F."/>
            <person name="Bowser L."/>
            <person name="Brooks S.Y."/>
            <person name="Carninci P."/>
            <person name="Chao Q."/>
            <person name="Choy N."/>
            <person name="Enju A."/>
            <person name="Goldsmith A.D."/>
            <person name="Gurjal M."/>
            <person name="Hansen N.F."/>
            <person name="Hayashizaki Y."/>
            <person name="Johnson-Hopson C."/>
            <person name="Hsuan V.W."/>
            <person name="Iida K."/>
            <person name="Karnes M."/>
            <person name="Khan S."/>
            <person name="Koesema E."/>
            <person name="Ishida J."/>
            <person name="Jiang P.X."/>
            <person name="Jones T."/>
            <person name="Kawai J."/>
            <person name="Kamiya A."/>
            <person name="Meyers C."/>
            <person name="Nakajima M."/>
            <person name="Narusaka M."/>
            <person name="Seki M."/>
            <person name="Sakurai T."/>
            <person name="Satou M."/>
            <person name="Tamse R."/>
            <person name="Vaysberg M."/>
            <person name="Wallender E.K."/>
            <person name="Wong C."/>
            <person name="Yamamura Y."/>
            <person name="Yuan S."/>
            <person name="Shinozaki K."/>
            <person name="Davis R.W."/>
            <person name="Theologis A."/>
            <person name="Ecker J.R."/>
        </authorList>
    </citation>
    <scope>NUCLEOTIDE SEQUENCE [LARGE SCALE MRNA]</scope>
    <source>
        <strain>cv. Columbia</strain>
    </source>
</reference>
<reference key="4">
    <citation type="submission" date="2002-03" db="EMBL/GenBank/DDBJ databases">
        <title>Full-length cDNA from Arabidopsis thaliana.</title>
        <authorList>
            <person name="Brover V.V."/>
            <person name="Troukhan M.E."/>
            <person name="Alexandrov N.A."/>
            <person name="Lu Y.-P."/>
            <person name="Flavell R.B."/>
            <person name="Feldmann K.A."/>
        </authorList>
    </citation>
    <scope>NUCLEOTIDE SEQUENCE [LARGE SCALE MRNA]</scope>
</reference>
<reference key="5">
    <citation type="journal article" date="1996" name="Plant J.">
        <title>Further progress towards a catalogue of all Arabidopsis genes: analysis of a set of 5000 non-redundant ESTs.</title>
        <authorList>
            <person name="Cooke R."/>
            <person name="Raynal M."/>
            <person name="Laudie M."/>
            <person name="Grellet F."/>
            <person name="Delseny M."/>
            <person name="Morris P.-C."/>
            <person name="Guerrier D."/>
            <person name="Giraudat J."/>
            <person name="Quigley F."/>
            <person name="Clabault G."/>
            <person name="Li Y.-F."/>
            <person name="Mache R."/>
            <person name="Krivitzky M."/>
            <person name="Gy I.J.-J."/>
            <person name="Kreis M."/>
            <person name="Lecharny A."/>
            <person name="Parmentier Y."/>
            <person name="Marbach J."/>
            <person name="Fleck J."/>
            <person name="Clement B."/>
            <person name="Philipps G."/>
            <person name="Herve C."/>
            <person name="Bardet C."/>
            <person name="Tremousaygue D."/>
            <person name="Lescure B."/>
            <person name="Lacomme C."/>
            <person name="Roby D."/>
            <person name="Jourjon M.-F."/>
            <person name="Chabrier P."/>
            <person name="Charpenteau J.-L."/>
            <person name="Desprez T."/>
            <person name="Amselem J."/>
            <person name="Chiapello H."/>
            <person name="Hoefte H."/>
        </authorList>
    </citation>
    <scope>NUCLEOTIDE SEQUENCE [LARGE SCALE MRNA] OF 17-149</scope>
    <source>
        <strain>cv. Columbia</strain>
    </source>
</reference>
<reference key="6">
    <citation type="journal article" date="2001" name="Plant Physiol.">
        <title>The organization of cytoplasmic ribosomal protein genes in the Arabidopsis genome.</title>
        <authorList>
            <person name="Barakat A."/>
            <person name="Szick-Miranda K."/>
            <person name="Chang I.-F."/>
            <person name="Guyot R."/>
            <person name="Blanc G."/>
            <person name="Cooke R."/>
            <person name="Delseny M."/>
            <person name="Bailey-Serres J."/>
        </authorList>
    </citation>
    <scope>GENE FAMILY ORGANIZATION</scope>
    <scope>NOMENCLATURE</scope>
</reference>
<reference key="7">
    <citation type="journal article" date="2023" name="Plant Cell">
        <title>An updated nomenclature for plant ribosomal protein genes.</title>
        <authorList>
            <person name="Scarpin M.R."/>
            <person name="Busche M."/>
            <person name="Martinez R.E."/>
            <person name="Harper L.C."/>
            <person name="Reiser L."/>
            <person name="Szakonyi D."/>
            <person name="Merchante C."/>
            <person name="Lan T."/>
            <person name="Xiong W."/>
            <person name="Mo B."/>
            <person name="Tang G."/>
            <person name="Chen X."/>
            <person name="Bailey-Serres J."/>
            <person name="Browning K.S."/>
            <person name="Brunkard J.O."/>
        </authorList>
    </citation>
    <scope>NOMENCLATURE</scope>
</reference>